<keyword id="KW-0002">3D-structure</keyword>
<keyword id="KW-0903">Direct protein sequencing</keyword>
<keyword id="KW-0378">Hydrolase</keyword>
<keyword id="KW-0408">Iron</keyword>
<keyword id="KW-0479">Metal-binding</keyword>
<keyword id="KW-0862">Zinc</keyword>
<accession>Q0QLE9</accession>
<evidence type="ECO:0000269" key="1">
    <source>
    </source>
</evidence>
<evidence type="ECO:0000269" key="2">
    <source>
    </source>
</evidence>
<evidence type="ECO:0000305" key="3"/>
<evidence type="ECO:0000312" key="4">
    <source>
        <dbReference type="EMBL" id="ABC88401.1"/>
    </source>
</evidence>
<evidence type="ECO:0007829" key="5">
    <source>
        <dbReference type="PDB" id="2VUN"/>
    </source>
</evidence>
<organism>
    <name type="scientific">Eubacterium barkeri</name>
    <name type="common">Clostridium barkeri</name>
    <dbReference type="NCBI Taxonomy" id="1528"/>
    <lineage>
        <taxon>Bacteria</taxon>
        <taxon>Bacillati</taxon>
        <taxon>Bacillota</taxon>
        <taxon>Clostridia</taxon>
        <taxon>Eubacteriales</taxon>
        <taxon>Eubacteriaceae</taxon>
        <taxon>Eubacterium</taxon>
    </lineage>
</organism>
<proteinExistence type="evidence at protein level"/>
<feature type="initiator methionine" description="Removed" evidence="1">
    <location>
        <position position="1"/>
    </location>
</feature>
<feature type="chain" id="PRO_0000403998" description="Enamidase" evidence="1">
    <location>
        <begin position="2"/>
        <end position="386"/>
    </location>
</feature>
<feature type="binding site" evidence="2">
    <location>
        <position position="67"/>
    </location>
    <ligand>
        <name>Zn(2+)</name>
        <dbReference type="ChEBI" id="CHEBI:29105"/>
    </ligand>
</feature>
<feature type="binding site" evidence="2">
    <location>
        <position position="69"/>
    </location>
    <ligand>
        <name>Zn(2+)</name>
        <dbReference type="ChEBI" id="CHEBI:29105"/>
    </ligand>
</feature>
<feature type="binding site" evidence="2">
    <location>
        <position position="164"/>
    </location>
    <ligand>
        <name>Fe cation</name>
        <dbReference type="ChEBI" id="CHEBI:24875"/>
    </ligand>
</feature>
<feature type="binding site" evidence="2">
    <location>
        <position position="164"/>
    </location>
    <ligand>
        <name>Zn(2+)</name>
        <dbReference type="ChEBI" id="CHEBI:29105"/>
    </ligand>
</feature>
<feature type="binding site" evidence="2">
    <location>
        <position position="193"/>
    </location>
    <ligand>
        <name>Fe cation</name>
        <dbReference type="ChEBI" id="CHEBI:24875"/>
    </ligand>
</feature>
<feature type="binding site" evidence="2">
    <location>
        <position position="220"/>
    </location>
    <ligand>
        <name>Fe cation</name>
        <dbReference type="ChEBI" id="CHEBI:24875"/>
    </ligand>
</feature>
<feature type="binding site" evidence="2">
    <location>
        <position position="276"/>
    </location>
    <ligand>
        <name>Zn(2+)</name>
        <dbReference type="ChEBI" id="CHEBI:29105"/>
    </ligand>
</feature>
<feature type="strand" evidence="5">
    <location>
        <begin position="3"/>
        <end position="8"/>
    </location>
</feature>
<feature type="strand" evidence="5">
    <location>
        <begin position="10"/>
        <end position="13"/>
    </location>
</feature>
<feature type="strand" evidence="5">
    <location>
        <begin position="25"/>
        <end position="30"/>
    </location>
</feature>
<feature type="strand" evidence="5">
    <location>
        <begin position="33"/>
        <end position="39"/>
    </location>
</feature>
<feature type="helix" evidence="5">
    <location>
        <begin position="40"/>
        <end position="43"/>
    </location>
</feature>
<feature type="strand" evidence="5">
    <location>
        <begin position="50"/>
        <end position="53"/>
    </location>
</feature>
<feature type="strand" evidence="5">
    <location>
        <begin position="58"/>
        <end position="61"/>
    </location>
</feature>
<feature type="strand" evidence="5">
    <location>
        <begin position="63"/>
        <end position="68"/>
    </location>
</feature>
<feature type="helix" evidence="5">
    <location>
        <begin position="77"/>
        <end position="79"/>
    </location>
</feature>
<feature type="strand" evidence="5">
    <location>
        <begin position="81"/>
        <end position="83"/>
    </location>
</feature>
<feature type="helix" evidence="5">
    <location>
        <begin position="84"/>
        <end position="89"/>
    </location>
</feature>
<feature type="turn" evidence="5">
    <location>
        <begin position="90"/>
        <end position="92"/>
    </location>
</feature>
<feature type="strand" evidence="5">
    <location>
        <begin position="93"/>
        <end position="98"/>
    </location>
</feature>
<feature type="helix" evidence="5">
    <location>
        <begin position="111"/>
        <end position="127"/>
    </location>
</feature>
<feature type="helix" evidence="5">
    <location>
        <begin position="130"/>
        <end position="132"/>
    </location>
</feature>
<feature type="strand" evidence="5">
    <location>
        <begin position="134"/>
        <end position="136"/>
    </location>
</feature>
<feature type="helix" evidence="5">
    <location>
        <begin position="148"/>
        <end position="156"/>
    </location>
</feature>
<feature type="strand" evidence="5">
    <location>
        <begin position="161"/>
        <end position="165"/>
    </location>
</feature>
<feature type="strand" evidence="5">
    <location>
        <begin position="167"/>
        <end position="169"/>
    </location>
</feature>
<feature type="helix" evidence="5">
    <location>
        <begin position="173"/>
        <end position="185"/>
    </location>
</feature>
<feature type="strand" evidence="5">
    <location>
        <begin position="189"/>
        <end position="193"/>
    </location>
</feature>
<feature type="helix" evidence="5">
    <location>
        <begin position="207"/>
        <end position="213"/>
    </location>
</feature>
<feature type="strand" evidence="5">
    <location>
        <begin position="216"/>
        <end position="219"/>
    </location>
</feature>
<feature type="turn" evidence="5">
    <location>
        <begin position="220"/>
        <end position="222"/>
    </location>
</feature>
<feature type="strand" evidence="5">
    <location>
        <begin position="224"/>
        <end position="226"/>
    </location>
</feature>
<feature type="helix" evidence="5">
    <location>
        <begin position="230"/>
        <end position="239"/>
    </location>
</feature>
<feature type="strand" evidence="5">
    <location>
        <begin position="243"/>
        <end position="250"/>
    </location>
</feature>
<feature type="helix" evidence="5">
    <location>
        <begin position="252"/>
        <end position="265"/>
    </location>
</feature>
<feature type="helix" evidence="5">
    <location>
        <begin position="268"/>
        <end position="270"/>
    </location>
</feature>
<feature type="strand" evidence="5">
    <location>
        <begin position="271"/>
        <end position="274"/>
    </location>
</feature>
<feature type="strand" evidence="5">
    <location>
        <begin position="277"/>
        <end position="279"/>
    </location>
</feature>
<feature type="helix" evidence="5">
    <location>
        <begin position="287"/>
        <end position="298"/>
    </location>
</feature>
<feature type="helix" evidence="5">
    <location>
        <begin position="303"/>
        <end position="310"/>
    </location>
</feature>
<feature type="helix" evidence="5">
    <location>
        <begin position="312"/>
        <end position="318"/>
    </location>
</feature>
<feature type="strand" evidence="5">
    <location>
        <begin position="333"/>
        <end position="337"/>
    </location>
</feature>
<feature type="helix" evidence="5">
    <location>
        <begin position="347"/>
        <end position="353"/>
    </location>
</feature>
<feature type="strand" evidence="5">
    <location>
        <begin position="358"/>
        <end position="364"/>
    </location>
</feature>
<feature type="strand" evidence="5">
    <location>
        <begin position="367"/>
        <end position="372"/>
    </location>
</feature>
<feature type="strand" evidence="5">
    <location>
        <begin position="374"/>
        <end position="376"/>
    </location>
</feature>
<feature type="strand" evidence="5">
    <location>
        <begin position="379"/>
        <end position="381"/>
    </location>
</feature>
<dbReference type="EC" id="3.5.2.18"/>
<dbReference type="EMBL" id="DQ310789">
    <property type="protein sequence ID" value="ABC88401.1"/>
    <property type="molecule type" value="Genomic_DNA"/>
</dbReference>
<dbReference type="RefSeq" id="WP_090245344.1">
    <property type="nucleotide sequence ID" value="NZ_FNOU01000012.1"/>
</dbReference>
<dbReference type="PDB" id="2VUN">
    <property type="method" value="X-ray"/>
    <property type="resolution" value="1.89 A"/>
    <property type="chains" value="A/B/C/D=1-386"/>
</dbReference>
<dbReference type="PDBsum" id="2VUN"/>
<dbReference type="SMR" id="Q0QLE9"/>
<dbReference type="DIP" id="DIP-61252N"/>
<dbReference type="STRING" id="1528.SAMN04488579_11211"/>
<dbReference type="KEGG" id="ag:ABC88401"/>
<dbReference type="OrthoDB" id="9797498at2"/>
<dbReference type="BioCyc" id="MetaCyc:MONOMER-13673"/>
<dbReference type="BRENDA" id="3.5.2.18">
    <property type="organism ID" value="1459"/>
</dbReference>
<dbReference type="SABIO-RK" id="Q0QLE9"/>
<dbReference type="UniPathway" id="UPA01010">
    <property type="reaction ID" value="UER01013"/>
</dbReference>
<dbReference type="EvolutionaryTrace" id="Q0QLE9"/>
<dbReference type="GO" id="GO:0005829">
    <property type="term" value="C:cytosol"/>
    <property type="evidence" value="ECO:0007669"/>
    <property type="project" value="TreeGrafter"/>
</dbReference>
<dbReference type="GO" id="GO:0043792">
    <property type="term" value="F:enamidase activity"/>
    <property type="evidence" value="ECO:0000314"/>
    <property type="project" value="UniProtKB"/>
</dbReference>
<dbReference type="GO" id="GO:0046872">
    <property type="term" value="F:metal ion binding"/>
    <property type="evidence" value="ECO:0007669"/>
    <property type="project" value="UniProtKB-KW"/>
</dbReference>
<dbReference type="GO" id="GO:1901848">
    <property type="term" value="P:nicotinate catabolic process"/>
    <property type="evidence" value="ECO:0000314"/>
    <property type="project" value="UniProtKB"/>
</dbReference>
<dbReference type="CDD" id="cd01292">
    <property type="entry name" value="metallo-dependent_hydrolases"/>
    <property type="match status" value="1"/>
</dbReference>
<dbReference type="FunFam" id="3.20.20.140:FF:000085">
    <property type="entry name" value="Enamidase"/>
    <property type="match status" value="1"/>
</dbReference>
<dbReference type="Gene3D" id="3.20.20.140">
    <property type="entry name" value="Metal-dependent hydrolases"/>
    <property type="match status" value="1"/>
</dbReference>
<dbReference type="Gene3D" id="2.30.40.10">
    <property type="entry name" value="Urease, subunit C, domain 1"/>
    <property type="match status" value="1"/>
</dbReference>
<dbReference type="InterPro" id="IPR006680">
    <property type="entry name" value="Amidohydro-rel"/>
</dbReference>
<dbReference type="InterPro" id="IPR011059">
    <property type="entry name" value="Metal-dep_hydrolase_composite"/>
</dbReference>
<dbReference type="InterPro" id="IPR032466">
    <property type="entry name" value="Metal_Hydrolase"/>
</dbReference>
<dbReference type="InterPro" id="IPR050378">
    <property type="entry name" value="Metallo-dep_Hydrolases_sf"/>
</dbReference>
<dbReference type="PANTHER" id="PTHR11647:SF1">
    <property type="entry name" value="COLLAPSIN RESPONSE MEDIATOR PROTEIN"/>
    <property type="match status" value="1"/>
</dbReference>
<dbReference type="PANTHER" id="PTHR11647">
    <property type="entry name" value="HYDRANTOINASE/DIHYDROPYRIMIDINASE FAMILY MEMBER"/>
    <property type="match status" value="1"/>
</dbReference>
<dbReference type="Pfam" id="PF01979">
    <property type="entry name" value="Amidohydro_1"/>
    <property type="match status" value="1"/>
</dbReference>
<dbReference type="SUPFAM" id="SSF51338">
    <property type="entry name" value="Composite domain of metallo-dependent hydrolases"/>
    <property type="match status" value="1"/>
</dbReference>
<dbReference type="SUPFAM" id="SSF51556">
    <property type="entry name" value="Metallo-dependent hydrolases"/>
    <property type="match status" value="1"/>
</dbReference>
<gene>
    <name evidence="4" type="primary">Ena</name>
</gene>
<name>ENA_EUBBA</name>
<sequence length="386" mass="39923">MSKTIIKNIGKIVSGDIKSPVLQADTIVVEDGLIAAIGGEELMKDAGDATIIDAAGSTVTPGLLDTHVHVSGGDYAPRQKTMDFISSALHGGVTTMISAGSPHFPGRPKDAAGTKALAITLSKSYYNARPAGVKVHGGAVILEKGLTEEDFIEMKKEGVWIVGEVGLGTIKNPEDAAPMVEWAHKHGFKVQMHTGGTSIPGSSTVTADDVIKTKPDVVSHINGGPTAISVQEVDRIMDETDFAMEIVQCGNPKIADYVARRAAEKGQLGRVIFGNDAPSGTGLIPLGILRNMCQIASMSDIDPEVAVCMATGNSTAVYGLNTGVIAPGKEADLIIMDTPLGSVAEDAMGAIAAGDIPGISVVLIDGEAVVTKSRNTPPAKRAAKIL</sequence>
<reference evidence="3 4" key="1">
    <citation type="journal article" date="2006" name="Proc. Natl. Acad. Sci. U.S.A.">
        <title>Molecular and functional analysis of nicotinate catabolism in Eubacterium barkeri.</title>
        <authorList>
            <person name="Alhapel A."/>
            <person name="Darley D.J."/>
            <person name="Wagener N."/>
            <person name="Eckel E."/>
            <person name="Elsner N."/>
            <person name="Pierik A.J."/>
        </authorList>
    </citation>
    <scope>NUCLEOTIDE SEQUENCE [GENOMIC DNA]</scope>
    <scope>PROTEIN SEQUENCE OF 2-28; 45-68 AND 271-290</scope>
    <scope>FUNCTION</scope>
    <scope>CATALYTIC ACTIVITY</scope>
    <scope>COFACTOR</scope>
    <scope>BIOPHYSICOCHEMICAL PROPERTIES</scope>
    <scope>PATHWAY</scope>
    <scope>SUBUNIT</scope>
    <scope>MASS SPECTROMETRY</scope>
    <source>
        <strain evidence="4">ATCC 25849 / DSM 1223 / JCM 1389 / NCIMB 10623 / VKM B-1775 / VPI 5359</strain>
    </source>
</reference>
<reference evidence="3" key="2">
    <citation type="journal article" date="2008" name="J. Mol. Biol.">
        <title>The crystal structure of enamidase: a bifunctional enzyme of the nicotinate catabolism.</title>
        <authorList>
            <person name="Kress D."/>
            <person name="Alhapel A."/>
            <person name="Pierik A.J."/>
            <person name="Essen L.O."/>
        </authorList>
    </citation>
    <scope>X-RAY CRYSTALLOGRAPHY (1.89 ANGSTROMS) IN COMPLEX WITH IRON AND ZINC</scope>
    <scope>FUNCTION</scope>
    <scope>CATALYTIC ACTIVITY</scope>
    <scope>COFACTOR</scope>
    <scope>SUBUNIT</scope>
    <source>
        <strain evidence="2">ATCC 25849 / DSM 1223 / JCM 1389 / NCIMB 10623 / VKM B-1775 / VPI 5359</strain>
    </source>
</reference>
<comment type="function">
    <text evidence="1 2">Decyclization of 6-oxo-1,4,5,6-tetrahydronicotinate to form 2-(enamine)glutarate, followed by hydrolysis to form (S)-2-formylglutarate.</text>
</comment>
<comment type="catalytic activity">
    <reaction evidence="1 2">
        <text>1,4,5,6-tetrahydro-6-oxonicotinate + 2 H2O = 2-formylglutarate + NH4(+)</text>
        <dbReference type="Rhea" id="RHEA:17209"/>
        <dbReference type="ChEBI" id="CHEBI:15377"/>
        <dbReference type="ChEBI" id="CHEBI:28938"/>
        <dbReference type="ChEBI" id="CHEBI:57777"/>
        <dbReference type="ChEBI" id="CHEBI:58776"/>
        <dbReference type="EC" id="3.5.2.18"/>
    </reaction>
</comment>
<comment type="cofactor">
    <cofactor>
        <name>Fe cation</name>
        <dbReference type="ChEBI" id="CHEBI:24875"/>
    </cofactor>
    <text>Binds 1 Fe cation per subunit.</text>
</comment>
<comment type="cofactor">
    <cofactor>
        <name>Zn(2+)</name>
        <dbReference type="ChEBI" id="CHEBI:29105"/>
    </cofactor>
    <text>Binds 1 zinc ion per subunit.</text>
</comment>
<comment type="biophysicochemical properties">
    <kinetics>
        <KM evidence="1">5 mM for 6-oxo-1,4,5,6-tetrahydronicotinate</KM>
    </kinetics>
</comment>
<comment type="pathway">
    <text evidence="1">Cofactor degradation; nicotinate degradation; propanoate and pyruvate from 6-hydroxynicotinate: step 2/8.</text>
</comment>
<comment type="subunit">
    <text evidence="1 2">Homotetramer. Dimer of dimers.</text>
</comment>
<comment type="mass spectrometry" mass="39750.0" error="40.0" method="MALDI" evidence="1"/>
<comment type="similarity">
    <text evidence="3">Belongs to the metallo-dependent hydrolases superfamily. Adenine deaminase family.</text>
</comment>
<protein>
    <recommendedName>
        <fullName evidence="4">Enamidase</fullName>
        <ecNumber>3.5.2.18</ecNumber>
    </recommendedName>
</protein>